<protein>
    <recommendedName>
        <fullName evidence="1">NAD-dependent protein deacetylase</fullName>
        <ecNumber evidence="1 2">2.3.1.286</ecNumber>
    </recommendedName>
    <alternativeName>
        <fullName evidence="1">Regulatory protein SIR2 homolog</fullName>
    </alternativeName>
</protein>
<organism>
    <name type="scientific">Sulfolobus acidocaldarius (strain ATCC 33909 / DSM 639 / JCM 8929 / NBRC 15157 / NCIMB 11770)</name>
    <dbReference type="NCBI Taxonomy" id="330779"/>
    <lineage>
        <taxon>Archaea</taxon>
        <taxon>Thermoproteota</taxon>
        <taxon>Thermoprotei</taxon>
        <taxon>Sulfolobales</taxon>
        <taxon>Sulfolobaceae</taxon>
        <taxon>Sulfolobus</taxon>
    </lineage>
</organism>
<sequence length="252" mass="27998">MYLVEEAKKVAEMILSSVNAIAFTGAGISTASGIPDFRGPQGLWKKYSPELASIEYFQKYPDAFWQFYSTRMKSLFEAKPNRAHYALAQLEKMGLIKAVITQNVDGLHSVAGSRNVIELHGNMRKSYCTSCLRSYDSLEVLARVEKGEVIPRCECGGILKPDVVLFGEPVHGIYEAMRIANESDLVLAIGSSLTVYPANQIPLIVKRNGGGLIILNGEETPYDEYADLVIRERIEIFLPEVISHIQSLHRSS</sequence>
<reference key="1">
    <citation type="journal article" date="2005" name="J. Bacteriol.">
        <title>The genome of Sulfolobus acidocaldarius, a model organism of the Crenarchaeota.</title>
        <authorList>
            <person name="Chen L."/>
            <person name="Bruegger K."/>
            <person name="Skovgaard M."/>
            <person name="Redder P."/>
            <person name="She Q."/>
            <person name="Torarinsson E."/>
            <person name="Greve B."/>
            <person name="Awayez M."/>
            <person name="Zibat A."/>
            <person name="Klenk H.-P."/>
            <person name="Garrett R.A."/>
        </authorList>
    </citation>
    <scope>NUCLEOTIDE SEQUENCE [LARGE SCALE GENOMIC DNA]</scope>
    <source>
        <strain>ATCC 33909 / DSM 639 / JCM 8929 / NBRC 15157 / NCIMB 11770</strain>
    </source>
</reference>
<evidence type="ECO:0000255" key="1">
    <source>
        <dbReference type="HAMAP-Rule" id="MF_01968"/>
    </source>
</evidence>
<evidence type="ECO:0000255" key="2">
    <source>
        <dbReference type="PROSITE-ProRule" id="PRU00236"/>
    </source>
</evidence>
<evidence type="ECO:0000305" key="3"/>
<name>NPD_SULAC</name>
<keyword id="KW-0963">Cytoplasm</keyword>
<keyword id="KW-0479">Metal-binding</keyword>
<keyword id="KW-0520">NAD</keyword>
<keyword id="KW-1185">Reference proteome</keyword>
<keyword id="KW-0804">Transcription</keyword>
<keyword id="KW-0805">Transcription regulation</keyword>
<keyword id="KW-0808">Transferase</keyword>
<keyword id="KW-0862">Zinc</keyword>
<gene>
    <name evidence="1" type="primary">cobB</name>
    <name type="ordered locus">Saci_0381</name>
</gene>
<proteinExistence type="inferred from homology"/>
<dbReference type="EC" id="2.3.1.286" evidence="1 2"/>
<dbReference type="EMBL" id="CP000077">
    <property type="protein sequence ID" value="AAY79797.1"/>
    <property type="status" value="ALT_INIT"/>
    <property type="molecule type" value="Genomic_DNA"/>
</dbReference>
<dbReference type="RefSeq" id="WP_011277299.1">
    <property type="nucleotide sequence ID" value="NC_007181.1"/>
</dbReference>
<dbReference type="SMR" id="Q4JBN2"/>
<dbReference type="STRING" id="330779.Saci_0381"/>
<dbReference type="GeneID" id="14550910"/>
<dbReference type="GeneID" id="78440731"/>
<dbReference type="KEGG" id="sai:Saci_0381"/>
<dbReference type="PATRIC" id="fig|330779.12.peg.379"/>
<dbReference type="eggNOG" id="arCOG04248">
    <property type="taxonomic scope" value="Archaea"/>
</dbReference>
<dbReference type="HOGENOM" id="CLU_023643_3_0_2"/>
<dbReference type="Proteomes" id="UP000001018">
    <property type="component" value="Chromosome"/>
</dbReference>
<dbReference type="GO" id="GO:0005737">
    <property type="term" value="C:cytoplasm"/>
    <property type="evidence" value="ECO:0007669"/>
    <property type="project" value="UniProtKB-SubCell"/>
</dbReference>
<dbReference type="GO" id="GO:0017136">
    <property type="term" value="F:histone deacetylase activity, NAD-dependent"/>
    <property type="evidence" value="ECO:0007669"/>
    <property type="project" value="TreeGrafter"/>
</dbReference>
<dbReference type="GO" id="GO:0070403">
    <property type="term" value="F:NAD+ binding"/>
    <property type="evidence" value="ECO:0007669"/>
    <property type="project" value="UniProtKB-UniRule"/>
</dbReference>
<dbReference type="GO" id="GO:0008270">
    <property type="term" value="F:zinc ion binding"/>
    <property type="evidence" value="ECO:0007669"/>
    <property type="project" value="UniProtKB-UniRule"/>
</dbReference>
<dbReference type="Gene3D" id="3.30.1600.10">
    <property type="entry name" value="SIR2/SIRT2 'Small Domain"/>
    <property type="match status" value="1"/>
</dbReference>
<dbReference type="Gene3D" id="3.40.50.1220">
    <property type="entry name" value="TPP-binding domain"/>
    <property type="match status" value="1"/>
</dbReference>
<dbReference type="HAMAP" id="MF_01968">
    <property type="entry name" value="Sirtuin_ClassU"/>
    <property type="match status" value="1"/>
</dbReference>
<dbReference type="InterPro" id="IPR029035">
    <property type="entry name" value="DHS-like_NAD/FAD-binding_dom"/>
</dbReference>
<dbReference type="InterPro" id="IPR050134">
    <property type="entry name" value="NAD-dep_sirtuin_deacylases"/>
</dbReference>
<dbReference type="InterPro" id="IPR003000">
    <property type="entry name" value="Sirtuin"/>
</dbReference>
<dbReference type="InterPro" id="IPR026591">
    <property type="entry name" value="Sirtuin_cat_small_dom_sf"/>
</dbReference>
<dbReference type="InterPro" id="IPR028628">
    <property type="entry name" value="Sirtuin_class_U"/>
</dbReference>
<dbReference type="InterPro" id="IPR026590">
    <property type="entry name" value="Ssirtuin_cat_dom"/>
</dbReference>
<dbReference type="NCBIfam" id="NF001753">
    <property type="entry name" value="PRK00481.1-3"/>
    <property type="match status" value="1"/>
</dbReference>
<dbReference type="NCBIfam" id="NF040867">
    <property type="entry name" value="prot_deacyl_CobB"/>
    <property type="match status" value="1"/>
</dbReference>
<dbReference type="PANTHER" id="PTHR11085:SF11">
    <property type="entry name" value="NAD-DEPENDENT PROTEIN DEACETYLASE"/>
    <property type="match status" value="1"/>
</dbReference>
<dbReference type="PANTHER" id="PTHR11085">
    <property type="entry name" value="NAD-DEPENDENT PROTEIN DEACYLASE SIRTUIN-5, MITOCHONDRIAL-RELATED"/>
    <property type="match status" value="1"/>
</dbReference>
<dbReference type="Pfam" id="PF02146">
    <property type="entry name" value="SIR2"/>
    <property type="match status" value="1"/>
</dbReference>
<dbReference type="SUPFAM" id="SSF52467">
    <property type="entry name" value="DHS-like NAD/FAD-binding domain"/>
    <property type="match status" value="1"/>
</dbReference>
<dbReference type="PROSITE" id="PS50305">
    <property type="entry name" value="SIRTUIN"/>
    <property type="match status" value="1"/>
</dbReference>
<accession>Q4JBN2</accession>
<comment type="function">
    <text evidence="1">NAD-dependent protein deacetylase which modulates the activities of several enzymes which are inactive in their acetylated form. Deacetylates the N-terminal lysine residue of Alba, the major archaeal chromatin protein and that, in turn, increases Alba's DNA binding affinity, thereby repressing transcription.</text>
</comment>
<comment type="catalytic activity">
    <reaction evidence="1">
        <text>N(6)-acetyl-L-lysyl-[protein] + NAD(+) + H2O = 2''-O-acetyl-ADP-D-ribose + nicotinamide + L-lysyl-[protein]</text>
        <dbReference type="Rhea" id="RHEA:43636"/>
        <dbReference type="Rhea" id="RHEA-COMP:9752"/>
        <dbReference type="Rhea" id="RHEA-COMP:10731"/>
        <dbReference type="ChEBI" id="CHEBI:15377"/>
        <dbReference type="ChEBI" id="CHEBI:17154"/>
        <dbReference type="ChEBI" id="CHEBI:29969"/>
        <dbReference type="ChEBI" id="CHEBI:57540"/>
        <dbReference type="ChEBI" id="CHEBI:61930"/>
        <dbReference type="ChEBI" id="CHEBI:83767"/>
        <dbReference type="EC" id="2.3.1.286"/>
    </reaction>
</comment>
<comment type="cofactor">
    <cofactor evidence="1">
        <name>Zn(2+)</name>
        <dbReference type="ChEBI" id="CHEBI:29105"/>
    </cofactor>
    <text evidence="1">Binds 1 zinc ion per subunit.</text>
</comment>
<comment type="subcellular location">
    <subcellularLocation>
        <location evidence="1">Cytoplasm</location>
    </subcellularLocation>
</comment>
<comment type="similarity">
    <text evidence="1">Belongs to the sirtuin family. Class U subfamily.</text>
</comment>
<comment type="sequence caution" evidence="3">
    <conflict type="erroneous initiation">
        <sequence resource="EMBL-CDS" id="AAY79797"/>
    </conflict>
    <text>Extended N-terminus.</text>
</comment>
<feature type="chain" id="PRO_0000110387" description="NAD-dependent protein deacetylase">
    <location>
        <begin position="1"/>
        <end position="252"/>
    </location>
</feature>
<feature type="domain" description="Deacetylase sirtuin-type" evidence="2">
    <location>
        <begin position="1"/>
        <end position="248"/>
    </location>
</feature>
<feature type="active site" description="Proton acceptor" evidence="2">
    <location>
        <position position="120"/>
    </location>
</feature>
<feature type="binding site" evidence="1">
    <location>
        <position position="26"/>
    </location>
    <ligand>
        <name>NAD(+)</name>
        <dbReference type="ChEBI" id="CHEBI:57540"/>
    </ligand>
</feature>
<feature type="binding site" evidence="1">
    <location>
        <position position="30"/>
    </location>
    <ligand>
        <name>NAD(+)</name>
        <dbReference type="ChEBI" id="CHEBI:57540"/>
    </ligand>
</feature>
<feature type="binding site" evidence="1">
    <location>
        <position position="37"/>
    </location>
    <ligand>
        <name>NAD(+)</name>
        <dbReference type="ChEBI" id="CHEBI:57540"/>
    </ligand>
</feature>
<feature type="binding site" evidence="1">
    <location>
        <position position="37"/>
    </location>
    <ligand>
        <name>nicotinamide</name>
        <dbReference type="ChEBI" id="CHEBI:17154"/>
    </ligand>
</feature>
<feature type="binding site" evidence="1">
    <location>
        <position position="38"/>
    </location>
    <ligand>
        <name>NAD(+)</name>
        <dbReference type="ChEBI" id="CHEBI:57540"/>
    </ligand>
</feature>
<feature type="binding site" evidence="1">
    <location>
        <position position="102"/>
    </location>
    <ligand>
        <name>NAD(+)</name>
        <dbReference type="ChEBI" id="CHEBI:57540"/>
    </ligand>
</feature>
<feature type="binding site" evidence="1">
    <location>
        <position position="104"/>
    </location>
    <ligand>
        <name>NAD(+)</name>
        <dbReference type="ChEBI" id="CHEBI:57540"/>
    </ligand>
</feature>
<feature type="binding site" evidence="1">
    <location>
        <position position="104"/>
    </location>
    <ligand>
        <name>nicotinamide</name>
        <dbReference type="ChEBI" id="CHEBI:17154"/>
    </ligand>
</feature>
<feature type="binding site" evidence="1">
    <location>
        <position position="105"/>
    </location>
    <ligand>
        <name>NAD(+)</name>
        <dbReference type="ChEBI" id="CHEBI:57540"/>
    </ligand>
</feature>
<feature type="binding site" evidence="1">
    <location>
        <position position="105"/>
    </location>
    <ligand>
        <name>nicotinamide</name>
        <dbReference type="ChEBI" id="CHEBI:17154"/>
    </ligand>
</feature>
<feature type="binding site" evidence="1">
    <location>
        <position position="120"/>
    </location>
    <ligand>
        <name>NAD(+)</name>
        <dbReference type="ChEBI" id="CHEBI:57540"/>
    </ligand>
</feature>
<feature type="binding site" evidence="1">
    <location>
        <position position="128"/>
    </location>
    <ligand>
        <name>Zn(2+)</name>
        <dbReference type="ChEBI" id="CHEBI:29105"/>
    </ligand>
</feature>
<feature type="binding site" evidence="1">
    <location>
        <position position="131"/>
    </location>
    <ligand>
        <name>Zn(2+)</name>
        <dbReference type="ChEBI" id="CHEBI:29105"/>
    </ligand>
</feature>
<feature type="binding site" evidence="1">
    <location>
        <position position="153"/>
    </location>
    <ligand>
        <name>Zn(2+)</name>
        <dbReference type="ChEBI" id="CHEBI:29105"/>
    </ligand>
</feature>
<feature type="binding site" evidence="1">
    <location>
        <position position="155"/>
    </location>
    <ligand>
        <name>Zn(2+)</name>
        <dbReference type="ChEBI" id="CHEBI:29105"/>
    </ligand>
</feature>
<feature type="binding site" evidence="1">
    <location>
        <position position="191"/>
    </location>
    <ligand>
        <name>NAD(+)</name>
        <dbReference type="ChEBI" id="CHEBI:57540"/>
    </ligand>
</feature>
<feature type="binding site" evidence="1">
    <location>
        <position position="192"/>
    </location>
    <ligand>
        <name>NAD(+)</name>
        <dbReference type="ChEBI" id="CHEBI:57540"/>
    </ligand>
</feature>
<feature type="binding site" evidence="1">
    <location>
        <position position="216"/>
    </location>
    <ligand>
        <name>NAD(+)</name>
        <dbReference type="ChEBI" id="CHEBI:57540"/>
    </ligand>
</feature>
<feature type="binding site" evidence="1">
    <location>
        <position position="234"/>
    </location>
    <ligand>
        <name>NAD(+)</name>
        <dbReference type="ChEBI" id="CHEBI:57540"/>
    </ligand>
</feature>